<name>Y5504_RHILO</name>
<gene>
    <name type="ordered locus">mlr5504</name>
</gene>
<reference key="1">
    <citation type="journal article" date="2000" name="DNA Res.">
        <title>Complete genome structure of the nitrogen-fixing symbiotic bacterium Mesorhizobium loti.</title>
        <authorList>
            <person name="Kaneko T."/>
            <person name="Nakamura Y."/>
            <person name="Sato S."/>
            <person name="Asamizu E."/>
            <person name="Kato T."/>
            <person name="Sasamoto S."/>
            <person name="Watanabe A."/>
            <person name="Idesawa K."/>
            <person name="Ishikawa A."/>
            <person name="Kawashima K."/>
            <person name="Kimura T."/>
            <person name="Kishida Y."/>
            <person name="Kiyokawa C."/>
            <person name="Kohara M."/>
            <person name="Matsumoto M."/>
            <person name="Matsuno A."/>
            <person name="Mochizuki Y."/>
            <person name="Nakayama S."/>
            <person name="Nakazaki N."/>
            <person name="Shimpo S."/>
            <person name="Sugimoto M."/>
            <person name="Takeuchi C."/>
            <person name="Yamada M."/>
            <person name="Tabata S."/>
        </authorList>
    </citation>
    <scope>NUCLEOTIDE SEQUENCE [LARGE SCALE GENOMIC DNA]</scope>
    <source>
        <strain>LMG 29417 / CECT 9101 / MAFF 303099</strain>
    </source>
</reference>
<protein>
    <recommendedName>
        <fullName evidence="1">Nucleoid-associated protein mlr5504</fullName>
    </recommendedName>
</protein>
<accession>Q98BM7</accession>
<keyword id="KW-0963">Cytoplasm</keyword>
<keyword id="KW-0238">DNA-binding</keyword>
<feature type="chain" id="PRO_0000170427" description="Nucleoid-associated protein mlr5504">
    <location>
        <begin position="1"/>
        <end position="107"/>
    </location>
</feature>
<organism>
    <name type="scientific">Mesorhizobium japonicum (strain LMG 29417 / CECT 9101 / MAFF 303099)</name>
    <name type="common">Mesorhizobium loti (strain MAFF 303099)</name>
    <dbReference type="NCBI Taxonomy" id="266835"/>
    <lineage>
        <taxon>Bacteria</taxon>
        <taxon>Pseudomonadati</taxon>
        <taxon>Pseudomonadota</taxon>
        <taxon>Alphaproteobacteria</taxon>
        <taxon>Hyphomicrobiales</taxon>
        <taxon>Phyllobacteriaceae</taxon>
        <taxon>Mesorhizobium</taxon>
    </lineage>
</organism>
<comment type="function">
    <text evidence="1">Binds to DNA and alters its conformation. May be involved in regulation of gene expression, nucleoid organization and DNA protection.</text>
</comment>
<comment type="subunit">
    <text evidence="1">Homodimer.</text>
</comment>
<comment type="subcellular location">
    <subcellularLocation>
        <location evidence="1">Cytoplasm</location>
        <location evidence="1">Nucleoid</location>
    </subcellularLocation>
</comment>
<comment type="similarity">
    <text evidence="1">Belongs to the YbaB/EbfC family.</text>
</comment>
<sequence>MKDLLGLMGKAKEMQAKFQAMQDEIATVESVGQAGGGLVSVILSGKFEMKSLKIDPSLFKEDEVEILEDLILAAHNDAKAKVEQIMQEKTKALTSGLPIPPGMKLPF</sequence>
<dbReference type="EMBL" id="BA000012">
    <property type="protein sequence ID" value="BAB51945.1"/>
    <property type="molecule type" value="Genomic_DNA"/>
</dbReference>
<dbReference type="RefSeq" id="WP_010913283.1">
    <property type="nucleotide sequence ID" value="NC_002678.2"/>
</dbReference>
<dbReference type="SMR" id="Q98BM7"/>
<dbReference type="KEGG" id="mlo:mlr5504"/>
<dbReference type="PATRIC" id="fig|266835.9.peg.4375"/>
<dbReference type="eggNOG" id="COG0718">
    <property type="taxonomic scope" value="Bacteria"/>
</dbReference>
<dbReference type="HOGENOM" id="CLU_140930_0_1_5"/>
<dbReference type="Proteomes" id="UP000000552">
    <property type="component" value="Chromosome"/>
</dbReference>
<dbReference type="GO" id="GO:0043590">
    <property type="term" value="C:bacterial nucleoid"/>
    <property type="evidence" value="ECO:0007669"/>
    <property type="project" value="UniProtKB-UniRule"/>
</dbReference>
<dbReference type="GO" id="GO:0005829">
    <property type="term" value="C:cytosol"/>
    <property type="evidence" value="ECO:0007669"/>
    <property type="project" value="TreeGrafter"/>
</dbReference>
<dbReference type="GO" id="GO:0003677">
    <property type="term" value="F:DNA binding"/>
    <property type="evidence" value="ECO:0007669"/>
    <property type="project" value="UniProtKB-UniRule"/>
</dbReference>
<dbReference type="Gene3D" id="3.30.1310.10">
    <property type="entry name" value="Nucleoid-associated protein YbaB-like domain"/>
    <property type="match status" value="1"/>
</dbReference>
<dbReference type="HAMAP" id="MF_00274">
    <property type="entry name" value="DNA_YbaB_EbfC"/>
    <property type="match status" value="1"/>
</dbReference>
<dbReference type="InterPro" id="IPR036894">
    <property type="entry name" value="YbaB-like_sf"/>
</dbReference>
<dbReference type="InterPro" id="IPR004401">
    <property type="entry name" value="YbaB/EbfC"/>
</dbReference>
<dbReference type="NCBIfam" id="TIGR00103">
    <property type="entry name" value="DNA_YbaB_EbfC"/>
    <property type="match status" value="1"/>
</dbReference>
<dbReference type="PANTHER" id="PTHR33449">
    <property type="entry name" value="NUCLEOID-ASSOCIATED PROTEIN YBAB"/>
    <property type="match status" value="1"/>
</dbReference>
<dbReference type="PANTHER" id="PTHR33449:SF1">
    <property type="entry name" value="NUCLEOID-ASSOCIATED PROTEIN YBAB"/>
    <property type="match status" value="1"/>
</dbReference>
<dbReference type="Pfam" id="PF02575">
    <property type="entry name" value="YbaB_DNA_bd"/>
    <property type="match status" value="1"/>
</dbReference>
<dbReference type="PIRSF" id="PIRSF004555">
    <property type="entry name" value="UCP004555"/>
    <property type="match status" value="1"/>
</dbReference>
<dbReference type="SUPFAM" id="SSF82607">
    <property type="entry name" value="YbaB-like"/>
    <property type="match status" value="1"/>
</dbReference>
<proteinExistence type="inferred from homology"/>
<evidence type="ECO:0000255" key="1">
    <source>
        <dbReference type="HAMAP-Rule" id="MF_00274"/>
    </source>
</evidence>